<protein>
    <recommendedName>
        <fullName evidence="1">Pyrroloquinoline-quinone synthase</fullName>
        <ecNumber evidence="1">1.3.3.11</ecNumber>
    </recommendedName>
    <alternativeName>
        <fullName evidence="1">Coenzyme PQQ synthesis protein C</fullName>
    </alternativeName>
    <alternativeName>
        <fullName evidence="1">Pyrroloquinoline quinone biosynthesis protein C</fullName>
    </alternativeName>
</protein>
<dbReference type="EC" id="1.3.3.11" evidence="1"/>
<dbReference type="EMBL" id="CP000783">
    <property type="protein sequence ID" value="ABU78223.1"/>
    <property type="molecule type" value="Genomic_DNA"/>
</dbReference>
<dbReference type="RefSeq" id="WP_012125575.1">
    <property type="nucleotide sequence ID" value="NC_009778.1"/>
</dbReference>
<dbReference type="SMR" id="A7MN58"/>
<dbReference type="KEGG" id="esa:ESA_02994"/>
<dbReference type="PATRIC" id="fig|290339.8.peg.2678"/>
<dbReference type="HOGENOM" id="CLU_080136_0_0_6"/>
<dbReference type="UniPathway" id="UPA00539"/>
<dbReference type="Proteomes" id="UP000000260">
    <property type="component" value="Chromosome"/>
</dbReference>
<dbReference type="GO" id="GO:0033732">
    <property type="term" value="F:pyrroloquinoline-quinone synthase activity"/>
    <property type="evidence" value="ECO:0007669"/>
    <property type="project" value="UniProtKB-EC"/>
</dbReference>
<dbReference type="GO" id="GO:0018189">
    <property type="term" value="P:pyrroloquinoline quinone biosynthetic process"/>
    <property type="evidence" value="ECO:0007669"/>
    <property type="project" value="UniProtKB-UniRule"/>
</dbReference>
<dbReference type="GO" id="GO:0006790">
    <property type="term" value="P:sulfur compound metabolic process"/>
    <property type="evidence" value="ECO:0007669"/>
    <property type="project" value="UniProtKB-ARBA"/>
</dbReference>
<dbReference type="CDD" id="cd19370">
    <property type="entry name" value="TenA_PqqC"/>
    <property type="match status" value="1"/>
</dbReference>
<dbReference type="Gene3D" id="1.20.910.10">
    <property type="entry name" value="Heme oxygenase-like"/>
    <property type="match status" value="1"/>
</dbReference>
<dbReference type="HAMAP" id="MF_00654">
    <property type="entry name" value="PQQ_syn_PqqC"/>
    <property type="match status" value="1"/>
</dbReference>
<dbReference type="InterPro" id="IPR016084">
    <property type="entry name" value="Haem_Oase-like_multi-hlx"/>
</dbReference>
<dbReference type="InterPro" id="IPR011845">
    <property type="entry name" value="PqqC"/>
</dbReference>
<dbReference type="InterPro" id="IPR039068">
    <property type="entry name" value="PqqC-like"/>
</dbReference>
<dbReference type="InterPro" id="IPR004305">
    <property type="entry name" value="Thiaminase-2/PQQC"/>
</dbReference>
<dbReference type="NCBIfam" id="TIGR02111">
    <property type="entry name" value="PQQ_syn_pqqC"/>
    <property type="match status" value="1"/>
</dbReference>
<dbReference type="PANTHER" id="PTHR40279:SF3">
    <property type="entry name" value="4-AMINOBENZOATE SYNTHASE"/>
    <property type="match status" value="1"/>
</dbReference>
<dbReference type="PANTHER" id="PTHR40279">
    <property type="entry name" value="PQQC-LIKE PROTEIN"/>
    <property type="match status" value="1"/>
</dbReference>
<dbReference type="Pfam" id="PF03070">
    <property type="entry name" value="TENA_THI-4"/>
    <property type="match status" value="1"/>
</dbReference>
<dbReference type="SUPFAM" id="SSF48613">
    <property type="entry name" value="Heme oxygenase-like"/>
    <property type="match status" value="1"/>
</dbReference>
<keyword id="KW-0560">Oxidoreductase</keyword>
<keyword id="KW-0884">PQQ biosynthesis</keyword>
<keyword id="KW-1185">Reference proteome</keyword>
<organism>
    <name type="scientific">Cronobacter sakazakii (strain ATCC BAA-894)</name>
    <name type="common">Enterobacter sakazakii</name>
    <dbReference type="NCBI Taxonomy" id="290339"/>
    <lineage>
        <taxon>Bacteria</taxon>
        <taxon>Pseudomonadati</taxon>
        <taxon>Pseudomonadota</taxon>
        <taxon>Gammaproteobacteria</taxon>
        <taxon>Enterobacterales</taxon>
        <taxon>Enterobacteriaceae</taxon>
        <taxon>Cronobacter</taxon>
    </lineage>
</organism>
<feature type="chain" id="PRO_1000061668" description="Pyrroloquinoline-quinone synthase">
    <location>
        <begin position="1"/>
        <end position="251"/>
    </location>
</feature>
<accession>A7MN58</accession>
<evidence type="ECO:0000255" key="1">
    <source>
        <dbReference type="HAMAP-Rule" id="MF_00654"/>
    </source>
</evidence>
<gene>
    <name evidence="1" type="primary">pqqC</name>
    <name type="ordered locus">ESA_02994</name>
</gene>
<sequence length="251" mass="29395">MTEQRLLTPDEFEAALRAKGAFYHIHHPYHIAMHNGEATREQIQGWVANRFYYQTSIPIKDAAIMANCPHPEVRRQWVQRILDHDGYDGSEGGIEAWLRLGEAVGLSRESLLSEERVLPGVRFAVDAYVNFARRACWEEAACSSLTELFAPQIHQARLDSWPQHYTWIEAEGYDYFRSRLNQARRDVEHGLSLALEYCNTMERQQRMLEILQFKLDILWSMLDAMTMAYTLDRAPYHTVTREAVWHKRRLV</sequence>
<comment type="function">
    <text evidence="1">Ring cyclization and eight-electron oxidation of 3a-(2-amino-2-carboxyethyl)-4,5-dioxo-4,5,6,7,8,9-hexahydroquinoline-7,9-dicarboxylic-acid to PQQ.</text>
</comment>
<comment type="catalytic activity">
    <reaction evidence="1">
        <text>6-(2-amino-2-carboxyethyl)-7,8-dioxo-1,2,3,4,7,8-hexahydroquinoline-2,4-dicarboxylate + 3 O2 = pyrroloquinoline quinone + 2 H2O2 + 2 H2O + H(+)</text>
        <dbReference type="Rhea" id="RHEA:10692"/>
        <dbReference type="ChEBI" id="CHEBI:15377"/>
        <dbReference type="ChEBI" id="CHEBI:15378"/>
        <dbReference type="ChEBI" id="CHEBI:15379"/>
        <dbReference type="ChEBI" id="CHEBI:16240"/>
        <dbReference type="ChEBI" id="CHEBI:58442"/>
        <dbReference type="ChEBI" id="CHEBI:58778"/>
        <dbReference type="EC" id="1.3.3.11"/>
    </reaction>
</comment>
<comment type="pathway">
    <text evidence="1">Cofactor biosynthesis; pyrroloquinoline quinone biosynthesis.</text>
</comment>
<comment type="similarity">
    <text evidence="1">Belongs to the PqqC family.</text>
</comment>
<name>PQQC_CROS8</name>
<reference key="1">
    <citation type="journal article" date="2010" name="PLoS ONE">
        <title>Genome sequence of Cronobacter sakazakii BAA-894 and comparative genomic hybridization analysis with other Cronobacter species.</title>
        <authorList>
            <person name="Kucerova E."/>
            <person name="Clifton S.W."/>
            <person name="Xia X.Q."/>
            <person name="Long F."/>
            <person name="Porwollik S."/>
            <person name="Fulton L."/>
            <person name="Fronick C."/>
            <person name="Minx P."/>
            <person name="Kyung K."/>
            <person name="Warren W."/>
            <person name="Fulton R."/>
            <person name="Feng D."/>
            <person name="Wollam A."/>
            <person name="Shah N."/>
            <person name="Bhonagiri V."/>
            <person name="Nash W.E."/>
            <person name="Hallsworth-Pepin K."/>
            <person name="Wilson R.K."/>
            <person name="McClelland M."/>
            <person name="Forsythe S.J."/>
        </authorList>
    </citation>
    <scope>NUCLEOTIDE SEQUENCE [LARGE SCALE GENOMIC DNA]</scope>
    <source>
        <strain>ATCC BAA-894</strain>
    </source>
</reference>
<proteinExistence type="inferred from homology"/>